<accession>Q8K9A0</accession>
<name>ISPA_BUCAP</name>
<sequence length="294" mass="33881">MNFSHLYDIYYNRINKKLFEIIQELPFQDSVLFRAMKYSTLSGGKRLRACLIYATGETFQVNIAALDVISAAVELVHSYSLIHDDLPCIDNDYFRRGKISCHIKYGENFALLAGDALQGLAFNILSNSNMPGVHDSIRLKMIAEFSNAIGYSGMCIGQMLDLEKERKKINISELEKINLYKTAFLIRCSIRLAYFASNNFSKEVLFILDKFSVSIGLAFQIQDDILDLKNDIKKLESKRNKTKNTYPLLIGLKKSKIKIKELYKEAFFTLEILKKNFNVNILKLLTQFIMKRFK</sequence>
<evidence type="ECO:0000250" key="1"/>
<evidence type="ECO:0000250" key="2">
    <source>
        <dbReference type="UniProtKB" id="P14324"/>
    </source>
</evidence>
<evidence type="ECO:0000250" key="3">
    <source>
        <dbReference type="UniProtKB" id="Q12051"/>
    </source>
</evidence>
<evidence type="ECO:0000305" key="4"/>
<gene>
    <name type="primary">ispA</name>
    <name type="ordered locus">BUsg_449</name>
</gene>
<dbReference type="EC" id="2.5.1.10"/>
<dbReference type="EMBL" id="AE013218">
    <property type="protein sequence ID" value="AAM67992.1"/>
    <property type="molecule type" value="Genomic_DNA"/>
</dbReference>
<dbReference type="RefSeq" id="WP_011053959.1">
    <property type="nucleotide sequence ID" value="NC_004061.1"/>
</dbReference>
<dbReference type="SMR" id="Q8K9A0"/>
<dbReference type="STRING" id="198804.BUsg_449"/>
<dbReference type="GeneID" id="93003920"/>
<dbReference type="KEGG" id="bas:BUsg_449"/>
<dbReference type="eggNOG" id="COG0142">
    <property type="taxonomic scope" value="Bacteria"/>
</dbReference>
<dbReference type="HOGENOM" id="CLU_014015_0_1_6"/>
<dbReference type="Proteomes" id="UP000000416">
    <property type="component" value="Chromosome"/>
</dbReference>
<dbReference type="GO" id="GO:0005737">
    <property type="term" value="C:cytoplasm"/>
    <property type="evidence" value="ECO:0007669"/>
    <property type="project" value="UniProtKB-SubCell"/>
</dbReference>
<dbReference type="GO" id="GO:0004337">
    <property type="term" value="F:(2E,6E)-farnesyl diphosphate synthase activity"/>
    <property type="evidence" value="ECO:0007669"/>
    <property type="project" value="UniProtKB-EC"/>
</dbReference>
<dbReference type="GO" id="GO:0046872">
    <property type="term" value="F:metal ion binding"/>
    <property type="evidence" value="ECO:0007669"/>
    <property type="project" value="UniProtKB-KW"/>
</dbReference>
<dbReference type="GO" id="GO:0008299">
    <property type="term" value="P:isoprenoid biosynthetic process"/>
    <property type="evidence" value="ECO:0007669"/>
    <property type="project" value="UniProtKB-KW"/>
</dbReference>
<dbReference type="CDD" id="cd00685">
    <property type="entry name" value="Trans_IPPS_HT"/>
    <property type="match status" value="1"/>
</dbReference>
<dbReference type="FunFam" id="1.10.600.10:FF:000001">
    <property type="entry name" value="Geranylgeranyl diphosphate synthase"/>
    <property type="match status" value="1"/>
</dbReference>
<dbReference type="Gene3D" id="1.10.600.10">
    <property type="entry name" value="Farnesyl Diphosphate Synthase"/>
    <property type="match status" value="1"/>
</dbReference>
<dbReference type="InterPro" id="IPR008949">
    <property type="entry name" value="Isoprenoid_synthase_dom_sf"/>
</dbReference>
<dbReference type="InterPro" id="IPR000092">
    <property type="entry name" value="Polyprenyl_synt"/>
</dbReference>
<dbReference type="InterPro" id="IPR033749">
    <property type="entry name" value="Polyprenyl_synt_CS"/>
</dbReference>
<dbReference type="PANTHER" id="PTHR43281">
    <property type="entry name" value="FARNESYL DIPHOSPHATE SYNTHASE"/>
    <property type="match status" value="1"/>
</dbReference>
<dbReference type="PANTHER" id="PTHR43281:SF1">
    <property type="entry name" value="FARNESYL DIPHOSPHATE SYNTHASE"/>
    <property type="match status" value="1"/>
</dbReference>
<dbReference type="Pfam" id="PF00348">
    <property type="entry name" value="polyprenyl_synt"/>
    <property type="match status" value="1"/>
</dbReference>
<dbReference type="SFLD" id="SFLDS00005">
    <property type="entry name" value="Isoprenoid_Synthase_Type_I"/>
    <property type="match status" value="1"/>
</dbReference>
<dbReference type="SFLD" id="SFLDG01017">
    <property type="entry name" value="Polyprenyl_Transferase_Like"/>
    <property type="match status" value="1"/>
</dbReference>
<dbReference type="SUPFAM" id="SSF48576">
    <property type="entry name" value="Terpenoid synthases"/>
    <property type="match status" value="1"/>
</dbReference>
<dbReference type="PROSITE" id="PS00723">
    <property type="entry name" value="POLYPRENYL_SYNTHASE_1"/>
    <property type="match status" value="1"/>
</dbReference>
<dbReference type="PROSITE" id="PS00444">
    <property type="entry name" value="POLYPRENYL_SYNTHASE_2"/>
    <property type="match status" value="1"/>
</dbReference>
<comment type="catalytic activity">
    <reaction>
        <text>isopentenyl diphosphate + (2E)-geranyl diphosphate = (2E,6E)-farnesyl diphosphate + diphosphate</text>
        <dbReference type="Rhea" id="RHEA:19361"/>
        <dbReference type="ChEBI" id="CHEBI:33019"/>
        <dbReference type="ChEBI" id="CHEBI:58057"/>
        <dbReference type="ChEBI" id="CHEBI:128769"/>
        <dbReference type="ChEBI" id="CHEBI:175763"/>
        <dbReference type="EC" id="2.5.1.10"/>
    </reaction>
</comment>
<comment type="cofactor">
    <cofactor evidence="1">
        <name>Mg(2+)</name>
        <dbReference type="ChEBI" id="CHEBI:18420"/>
    </cofactor>
    <text evidence="1">Binds 2 Mg(2+) ions per subunit.</text>
</comment>
<comment type="subcellular location">
    <subcellularLocation>
        <location evidence="1">Cytoplasm</location>
    </subcellularLocation>
</comment>
<comment type="similarity">
    <text evidence="4">Belongs to the FPP/GGPP synthase family.</text>
</comment>
<proteinExistence type="inferred from homology"/>
<feature type="chain" id="PRO_0000123989" description="Farnesyl diphosphate synthase">
    <location>
        <begin position="1"/>
        <end position="294"/>
    </location>
</feature>
<feature type="binding site" evidence="2">
    <location>
        <position position="45"/>
    </location>
    <ligand>
        <name>isopentenyl diphosphate</name>
        <dbReference type="ChEBI" id="CHEBI:128769"/>
    </ligand>
</feature>
<feature type="binding site" evidence="2">
    <location>
        <position position="48"/>
    </location>
    <ligand>
        <name>isopentenyl diphosphate</name>
        <dbReference type="ChEBI" id="CHEBI:128769"/>
    </ligand>
</feature>
<feature type="binding site" evidence="3">
    <location>
        <position position="77"/>
    </location>
    <ligand>
        <name>isopentenyl diphosphate</name>
        <dbReference type="ChEBI" id="CHEBI:128769"/>
    </ligand>
</feature>
<feature type="binding site" evidence="2">
    <location>
        <position position="84"/>
    </location>
    <ligand>
        <name>Mg(2+)</name>
        <dbReference type="ChEBI" id="CHEBI:18420"/>
        <label>1</label>
    </ligand>
</feature>
<feature type="binding site" evidence="2">
    <location>
        <position position="84"/>
    </location>
    <ligand>
        <name>Mg(2+)</name>
        <dbReference type="ChEBI" id="CHEBI:18420"/>
        <label>2</label>
    </ligand>
</feature>
<feature type="binding site" evidence="2">
    <location>
        <position position="90"/>
    </location>
    <ligand>
        <name>Mg(2+)</name>
        <dbReference type="ChEBI" id="CHEBI:18420"/>
        <label>1</label>
    </ligand>
</feature>
<feature type="binding site" evidence="2">
    <location>
        <position position="90"/>
    </location>
    <ligand>
        <name>Mg(2+)</name>
        <dbReference type="ChEBI" id="CHEBI:18420"/>
        <label>2</label>
    </ligand>
</feature>
<feature type="binding site" evidence="1">
    <location>
        <position position="95"/>
    </location>
    <ligand>
        <name>(2E)-geranyl diphosphate</name>
        <dbReference type="ChEBI" id="CHEBI:58057"/>
    </ligand>
</feature>
<feature type="binding site" evidence="2">
    <location>
        <position position="96"/>
    </location>
    <ligand>
        <name>isopentenyl diphosphate</name>
        <dbReference type="ChEBI" id="CHEBI:128769"/>
    </ligand>
</feature>
<feature type="binding site" evidence="1">
    <location>
        <position position="181"/>
    </location>
    <ligand>
        <name>(2E)-geranyl diphosphate</name>
        <dbReference type="ChEBI" id="CHEBI:58057"/>
    </ligand>
</feature>
<feature type="binding site" evidence="1">
    <location>
        <position position="182"/>
    </location>
    <ligand>
        <name>(2E)-geranyl diphosphate</name>
        <dbReference type="ChEBI" id="CHEBI:58057"/>
    </ligand>
</feature>
<feature type="binding site" evidence="1">
    <location>
        <position position="220"/>
    </location>
    <ligand>
        <name>(2E)-geranyl diphosphate</name>
        <dbReference type="ChEBI" id="CHEBI:58057"/>
    </ligand>
</feature>
<keyword id="KW-0963">Cytoplasm</keyword>
<keyword id="KW-0414">Isoprene biosynthesis</keyword>
<keyword id="KW-0460">Magnesium</keyword>
<keyword id="KW-0479">Metal-binding</keyword>
<keyword id="KW-0808">Transferase</keyword>
<protein>
    <recommendedName>
        <fullName>Farnesyl diphosphate synthase</fullName>
        <shortName>FPP synthase</shortName>
        <ecNumber>2.5.1.10</ecNumber>
    </recommendedName>
    <alternativeName>
        <fullName>(2E,6E)-farnesyl diphosphate synthase</fullName>
    </alternativeName>
    <alternativeName>
        <fullName>Geranyltranstransferase</fullName>
    </alternativeName>
</protein>
<reference key="1">
    <citation type="journal article" date="2002" name="Science">
        <title>50 million years of genomic stasis in endosymbiotic bacteria.</title>
        <authorList>
            <person name="Tamas I."/>
            <person name="Klasson L."/>
            <person name="Canbaeck B."/>
            <person name="Naeslund A.K."/>
            <person name="Eriksson A.-S."/>
            <person name="Wernegreen J.J."/>
            <person name="Sandstroem J.P."/>
            <person name="Moran N.A."/>
            <person name="Andersson S.G.E."/>
        </authorList>
    </citation>
    <scope>NUCLEOTIDE SEQUENCE [LARGE SCALE GENOMIC DNA]</scope>
    <source>
        <strain>Sg</strain>
    </source>
</reference>
<organism>
    <name type="scientific">Buchnera aphidicola subsp. Schizaphis graminum (strain Sg)</name>
    <dbReference type="NCBI Taxonomy" id="198804"/>
    <lineage>
        <taxon>Bacteria</taxon>
        <taxon>Pseudomonadati</taxon>
        <taxon>Pseudomonadota</taxon>
        <taxon>Gammaproteobacteria</taxon>
        <taxon>Enterobacterales</taxon>
        <taxon>Erwiniaceae</taxon>
        <taxon>Buchnera</taxon>
    </lineage>
</organism>